<feature type="chain" id="PRO_0000214188" description="UPF0283 membrane protein VP1870">
    <location>
        <begin position="1"/>
        <end position="346"/>
    </location>
</feature>
<feature type="transmembrane region" description="Helical" evidence="1">
    <location>
        <begin position="73"/>
        <end position="93"/>
    </location>
</feature>
<feature type="transmembrane region" description="Helical" evidence="1">
    <location>
        <begin position="98"/>
        <end position="118"/>
    </location>
</feature>
<feature type="region of interest" description="Disordered" evidence="2">
    <location>
        <begin position="1"/>
        <end position="30"/>
    </location>
</feature>
<feature type="compositionally biased region" description="Polar residues" evidence="2">
    <location>
        <begin position="21"/>
        <end position="30"/>
    </location>
</feature>
<sequence length="346" mass="37775">MSELKQKQIFSEKALEKEQQSDSPELTAQKTFSEKETFVPVKIEEDRIETEQELQLEHVIRPRPGRKWLATSVFATFAGLVGWQAVDSVVTAVQTADWLALGWVGFITAVASLGLGAIGKELWKLRKLRNHFSIQEEAELLVHSDSVGKGKVFCEKVAEESGVLAENPGFDRWQNSINPAHSDAEILDMYDSMVVSQQDKLATKVVSQHATESAALVAVSPLAAADMLLVAWRNFKMIDNLSKVYGVELGYASRIKLLRAVFVNMAAAGASELAIDAGMDLMSMDLAGKVSARAGQGLGVGILTARLGLKAMALLRPLPWYPDRQVKLGTIRKAVVAKVASITMKP</sequence>
<organism>
    <name type="scientific">Vibrio parahaemolyticus serotype O3:K6 (strain RIMD 2210633)</name>
    <dbReference type="NCBI Taxonomy" id="223926"/>
    <lineage>
        <taxon>Bacteria</taxon>
        <taxon>Pseudomonadati</taxon>
        <taxon>Pseudomonadota</taxon>
        <taxon>Gammaproteobacteria</taxon>
        <taxon>Vibrionales</taxon>
        <taxon>Vibrionaceae</taxon>
        <taxon>Vibrio</taxon>
    </lineage>
</organism>
<name>Y1870_VIBPA</name>
<protein>
    <recommendedName>
        <fullName evidence="1">UPF0283 membrane protein VP1870</fullName>
    </recommendedName>
</protein>
<keyword id="KW-0997">Cell inner membrane</keyword>
<keyword id="KW-1003">Cell membrane</keyword>
<keyword id="KW-0472">Membrane</keyword>
<keyword id="KW-0812">Transmembrane</keyword>
<keyword id="KW-1133">Transmembrane helix</keyword>
<proteinExistence type="inferred from homology"/>
<accession>Q87NJ8</accession>
<gene>
    <name type="ordered locus">VP1870</name>
</gene>
<reference key="1">
    <citation type="journal article" date="2003" name="Lancet">
        <title>Genome sequence of Vibrio parahaemolyticus: a pathogenic mechanism distinct from that of V. cholerae.</title>
        <authorList>
            <person name="Makino K."/>
            <person name="Oshima K."/>
            <person name="Kurokawa K."/>
            <person name="Yokoyama K."/>
            <person name="Uda T."/>
            <person name="Tagomori K."/>
            <person name="Iijima Y."/>
            <person name="Najima M."/>
            <person name="Nakano M."/>
            <person name="Yamashita A."/>
            <person name="Kubota Y."/>
            <person name="Kimura S."/>
            <person name="Yasunaga T."/>
            <person name="Honda T."/>
            <person name="Shinagawa H."/>
            <person name="Hattori M."/>
            <person name="Iida T."/>
        </authorList>
    </citation>
    <scope>NUCLEOTIDE SEQUENCE [LARGE SCALE GENOMIC DNA]</scope>
    <source>
        <strain>RIMD 2210633</strain>
    </source>
</reference>
<dbReference type="EMBL" id="BA000031">
    <property type="protein sequence ID" value="BAC60133.1"/>
    <property type="molecule type" value="Genomic_DNA"/>
</dbReference>
<dbReference type="RefSeq" id="NP_798249.1">
    <property type="nucleotide sequence ID" value="NC_004603.1"/>
</dbReference>
<dbReference type="RefSeq" id="WP_005483263.1">
    <property type="nucleotide sequence ID" value="NC_004603.1"/>
</dbReference>
<dbReference type="GeneID" id="1189377"/>
<dbReference type="KEGG" id="vpa:VP1870"/>
<dbReference type="PATRIC" id="fig|223926.6.peg.1786"/>
<dbReference type="eggNOG" id="COG3768">
    <property type="taxonomic scope" value="Bacteria"/>
</dbReference>
<dbReference type="HOGENOM" id="CLU_057693_2_0_6"/>
<dbReference type="Proteomes" id="UP000002493">
    <property type="component" value="Chromosome 1"/>
</dbReference>
<dbReference type="GO" id="GO:0005886">
    <property type="term" value="C:plasma membrane"/>
    <property type="evidence" value="ECO:0007669"/>
    <property type="project" value="UniProtKB-SubCell"/>
</dbReference>
<dbReference type="HAMAP" id="MF_01085">
    <property type="entry name" value="UPF0283"/>
    <property type="match status" value="1"/>
</dbReference>
<dbReference type="InterPro" id="IPR021147">
    <property type="entry name" value="DUF697"/>
</dbReference>
<dbReference type="InterPro" id="IPR006507">
    <property type="entry name" value="UPF0283"/>
</dbReference>
<dbReference type="NCBIfam" id="TIGR01620">
    <property type="entry name" value="hyp_HI0043"/>
    <property type="match status" value="1"/>
</dbReference>
<dbReference type="PANTHER" id="PTHR39342">
    <property type="entry name" value="UPF0283 MEMBRANE PROTEIN YCJF"/>
    <property type="match status" value="1"/>
</dbReference>
<dbReference type="PANTHER" id="PTHR39342:SF1">
    <property type="entry name" value="UPF0283 MEMBRANE PROTEIN YCJF"/>
    <property type="match status" value="1"/>
</dbReference>
<dbReference type="Pfam" id="PF05128">
    <property type="entry name" value="DUF697"/>
    <property type="match status" value="1"/>
</dbReference>
<comment type="subcellular location">
    <subcellularLocation>
        <location evidence="1">Cell inner membrane</location>
        <topology evidence="1">Multi-pass membrane protein</topology>
    </subcellularLocation>
</comment>
<comment type="similarity">
    <text evidence="1">Belongs to the UPF0283 family.</text>
</comment>
<evidence type="ECO:0000255" key="1">
    <source>
        <dbReference type="HAMAP-Rule" id="MF_01085"/>
    </source>
</evidence>
<evidence type="ECO:0000256" key="2">
    <source>
        <dbReference type="SAM" id="MobiDB-lite"/>
    </source>
</evidence>